<accession>A9MPL5</accession>
<organism>
    <name type="scientific">Salmonella arizonae (strain ATCC BAA-731 / CDC346-86 / RSK2980)</name>
    <dbReference type="NCBI Taxonomy" id="41514"/>
    <lineage>
        <taxon>Bacteria</taxon>
        <taxon>Pseudomonadati</taxon>
        <taxon>Pseudomonadota</taxon>
        <taxon>Gammaproteobacteria</taxon>
        <taxon>Enterobacterales</taxon>
        <taxon>Enterobacteriaceae</taxon>
        <taxon>Salmonella</taxon>
    </lineage>
</organism>
<gene>
    <name evidence="1" type="primary">sfsA</name>
    <name type="ordered locus">SARI_02810</name>
</gene>
<reference key="1">
    <citation type="submission" date="2007-11" db="EMBL/GenBank/DDBJ databases">
        <authorList>
            <consortium name="The Salmonella enterica serovar Arizonae Genome Sequencing Project"/>
            <person name="McClelland M."/>
            <person name="Sanderson E.K."/>
            <person name="Porwollik S."/>
            <person name="Spieth J."/>
            <person name="Clifton W.S."/>
            <person name="Fulton R."/>
            <person name="Chunyan W."/>
            <person name="Wollam A."/>
            <person name="Shah N."/>
            <person name="Pepin K."/>
            <person name="Bhonagiri V."/>
            <person name="Nash W."/>
            <person name="Johnson M."/>
            <person name="Thiruvilangam P."/>
            <person name="Wilson R."/>
        </authorList>
    </citation>
    <scope>NUCLEOTIDE SEQUENCE [LARGE SCALE GENOMIC DNA]</scope>
    <source>
        <strain>ATCC BAA-731 / CDC346-86 / RSK2980</strain>
    </source>
</reference>
<feature type="chain" id="PRO_1000075544" description="Sugar fermentation stimulation protein A">
    <location>
        <begin position="1"/>
        <end position="234"/>
    </location>
</feature>
<feature type="DNA-binding region" description="H-T-H motif" evidence="1">
    <location>
        <begin position="201"/>
        <end position="220"/>
    </location>
</feature>
<keyword id="KW-0238">DNA-binding</keyword>
<keyword id="KW-1185">Reference proteome</keyword>
<dbReference type="EMBL" id="CP000880">
    <property type="protein sequence ID" value="ABX22658.1"/>
    <property type="molecule type" value="Genomic_DNA"/>
</dbReference>
<dbReference type="SMR" id="A9MPL5"/>
<dbReference type="STRING" id="41514.SARI_02810"/>
<dbReference type="KEGG" id="ses:SARI_02810"/>
<dbReference type="HOGENOM" id="CLU_052299_2_0_6"/>
<dbReference type="Proteomes" id="UP000002084">
    <property type="component" value="Chromosome"/>
</dbReference>
<dbReference type="GO" id="GO:0003677">
    <property type="term" value="F:DNA binding"/>
    <property type="evidence" value="ECO:0007669"/>
    <property type="project" value="UniProtKB-KW"/>
</dbReference>
<dbReference type="CDD" id="cd22359">
    <property type="entry name" value="SfsA-like_bacterial"/>
    <property type="match status" value="1"/>
</dbReference>
<dbReference type="FunFam" id="2.40.50.580:FF:000001">
    <property type="entry name" value="Sugar fermentation stimulation protein A"/>
    <property type="match status" value="1"/>
</dbReference>
<dbReference type="FunFam" id="3.40.1350.60:FF:000001">
    <property type="entry name" value="Sugar fermentation stimulation protein A"/>
    <property type="match status" value="1"/>
</dbReference>
<dbReference type="Gene3D" id="2.40.50.580">
    <property type="match status" value="1"/>
</dbReference>
<dbReference type="Gene3D" id="3.40.1350.60">
    <property type="match status" value="1"/>
</dbReference>
<dbReference type="HAMAP" id="MF_00095">
    <property type="entry name" value="SfsA"/>
    <property type="match status" value="1"/>
</dbReference>
<dbReference type="InterPro" id="IPR005224">
    <property type="entry name" value="SfsA"/>
</dbReference>
<dbReference type="InterPro" id="IPR040452">
    <property type="entry name" value="SfsA_C"/>
</dbReference>
<dbReference type="InterPro" id="IPR041465">
    <property type="entry name" value="SfsA_N"/>
</dbReference>
<dbReference type="NCBIfam" id="TIGR00230">
    <property type="entry name" value="sfsA"/>
    <property type="match status" value="1"/>
</dbReference>
<dbReference type="PANTHER" id="PTHR30545">
    <property type="entry name" value="SUGAR FERMENTATION STIMULATION PROTEIN A"/>
    <property type="match status" value="1"/>
</dbReference>
<dbReference type="PANTHER" id="PTHR30545:SF2">
    <property type="entry name" value="SUGAR FERMENTATION STIMULATION PROTEIN A"/>
    <property type="match status" value="1"/>
</dbReference>
<dbReference type="Pfam" id="PF03749">
    <property type="entry name" value="SfsA"/>
    <property type="match status" value="1"/>
</dbReference>
<dbReference type="Pfam" id="PF17746">
    <property type="entry name" value="SfsA_N"/>
    <property type="match status" value="1"/>
</dbReference>
<evidence type="ECO:0000255" key="1">
    <source>
        <dbReference type="HAMAP-Rule" id="MF_00095"/>
    </source>
</evidence>
<sequence length="234" mass="26297">MLFSPPLQRATLIQRYKRFLADVITLDGTALTLHCPNTGAMTGCATPGDTVWYSTSENTKRKYPHTWELTETQSGVFICVNTLWANRLTKEAIQEDRLPELAGYNILKSEVKYGAERSRIDFMLQADFRPDCYIEVKSVTLAEKENGYFPDAITERGQKHLRELMGVAAAGHRAVVLFAVLHSAITRFSPARHIDIKYAQLLSEAQNKGVEVLAYKAELSATKMELNKSVPIML</sequence>
<comment type="function">
    <text evidence="1">Binds to DNA non-specifically. Could be a regulatory factor involved in maltose metabolism.</text>
</comment>
<comment type="similarity">
    <text evidence="1">Belongs to the SfsA family.</text>
</comment>
<name>SFSA_SALAR</name>
<protein>
    <recommendedName>
        <fullName evidence="1">Sugar fermentation stimulation protein A</fullName>
    </recommendedName>
</protein>
<proteinExistence type="inferred from homology"/>